<feature type="chain" id="PRO_0000323801" description="Uridylate kinase">
    <location>
        <begin position="1"/>
        <end position="238"/>
    </location>
</feature>
<feature type="region of interest" description="Involved in allosteric activation by GTP" evidence="1">
    <location>
        <begin position="20"/>
        <end position="25"/>
    </location>
</feature>
<feature type="binding site" evidence="1">
    <location>
        <begin position="12"/>
        <end position="15"/>
    </location>
    <ligand>
        <name>ATP</name>
        <dbReference type="ChEBI" id="CHEBI:30616"/>
    </ligand>
</feature>
<feature type="binding site" evidence="1">
    <location>
        <position position="54"/>
    </location>
    <ligand>
        <name>UMP</name>
        <dbReference type="ChEBI" id="CHEBI:57865"/>
    </ligand>
</feature>
<feature type="binding site" evidence="1">
    <location>
        <position position="55"/>
    </location>
    <ligand>
        <name>ATP</name>
        <dbReference type="ChEBI" id="CHEBI:30616"/>
    </ligand>
</feature>
<feature type="binding site" evidence="1">
    <location>
        <position position="59"/>
    </location>
    <ligand>
        <name>ATP</name>
        <dbReference type="ChEBI" id="CHEBI:30616"/>
    </ligand>
</feature>
<feature type="binding site" evidence="1">
    <location>
        <position position="74"/>
    </location>
    <ligand>
        <name>UMP</name>
        <dbReference type="ChEBI" id="CHEBI:57865"/>
    </ligand>
</feature>
<feature type="binding site" evidence="1">
    <location>
        <begin position="135"/>
        <end position="142"/>
    </location>
    <ligand>
        <name>UMP</name>
        <dbReference type="ChEBI" id="CHEBI:57865"/>
    </ligand>
</feature>
<feature type="binding site" evidence="1">
    <location>
        <position position="162"/>
    </location>
    <ligand>
        <name>ATP</name>
        <dbReference type="ChEBI" id="CHEBI:30616"/>
    </ligand>
</feature>
<feature type="binding site" evidence="1">
    <location>
        <position position="163"/>
    </location>
    <ligand>
        <name>ATP</name>
        <dbReference type="ChEBI" id="CHEBI:30616"/>
    </ligand>
</feature>
<feature type="binding site" evidence="1">
    <location>
        <position position="168"/>
    </location>
    <ligand>
        <name>ATP</name>
        <dbReference type="ChEBI" id="CHEBI:30616"/>
    </ligand>
</feature>
<feature type="binding site" evidence="1">
    <location>
        <position position="171"/>
    </location>
    <ligand>
        <name>ATP</name>
        <dbReference type="ChEBI" id="CHEBI:30616"/>
    </ligand>
</feature>
<keyword id="KW-0021">Allosteric enzyme</keyword>
<keyword id="KW-0067">ATP-binding</keyword>
<keyword id="KW-0963">Cytoplasm</keyword>
<keyword id="KW-0418">Kinase</keyword>
<keyword id="KW-0547">Nucleotide-binding</keyword>
<keyword id="KW-0665">Pyrimidine biosynthesis</keyword>
<keyword id="KW-1185">Reference proteome</keyword>
<keyword id="KW-0808">Transferase</keyword>
<sequence>MTDPVYRRVVIKLSGEYLAGQQGFGIDQPTVDRVADDLIAARHLGTEVAVVIGGGNIVRGVEVSSRGVSRPTGDTMGMLATMMNCLALEAAIERKGTPARTLSAFVMPEISELFTRTAAHKYLAEGRIVLLGGGTGNPFFTTDTTAVLRAAEIGAQAVLKATNVDGVYSADPKKDPTATRFDRLTHSQAIEGGYKVMDATAFALARETSLPIIVFSIAEPGSIGAILRGIGHGTIVAG</sequence>
<reference key="1">
    <citation type="journal article" date="2002" name="DNA Res.">
        <title>Complete genomic sequence of nitrogen-fixing symbiotic bacterium Bradyrhizobium japonicum USDA110.</title>
        <authorList>
            <person name="Kaneko T."/>
            <person name="Nakamura Y."/>
            <person name="Sato S."/>
            <person name="Minamisawa K."/>
            <person name="Uchiumi T."/>
            <person name="Sasamoto S."/>
            <person name="Watanabe A."/>
            <person name="Idesawa K."/>
            <person name="Iriguchi M."/>
            <person name="Kawashima K."/>
            <person name="Kohara M."/>
            <person name="Matsumoto M."/>
            <person name="Shimpo S."/>
            <person name="Tsuruoka H."/>
            <person name="Wada T."/>
            <person name="Yamada M."/>
            <person name="Tabata S."/>
        </authorList>
    </citation>
    <scope>NUCLEOTIDE SEQUENCE [LARGE SCALE GENOMIC DNA]</scope>
    <source>
        <strain>JCM 10833 / BCRC 13528 / IAM 13628 / NBRC 14792 / USDA 110</strain>
    </source>
</reference>
<name>PYRH_BRADU</name>
<comment type="function">
    <text evidence="1">Catalyzes the reversible phosphorylation of UMP to UDP.</text>
</comment>
<comment type="catalytic activity">
    <reaction evidence="1">
        <text>UMP + ATP = UDP + ADP</text>
        <dbReference type="Rhea" id="RHEA:24400"/>
        <dbReference type="ChEBI" id="CHEBI:30616"/>
        <dbReference type="ChEBI" id="CHEBI:57865"/>
        <dbReference type="ChEBI" id="CHEBI:58223"/>
        <dbReference type="ChEBI" id="CHEBI:456216"/>
        <dbReference type="EC" id="2.7.4.22"/>
    </reaction>
</comment>
<comment type="activity regulation">
    <text evidence="1">Allosterically activated by GTP. Inhibited by UTP.</text>
</comment>
<comment type="pathway">
    <text evidence="1">Pyrimidine metabolism; CTP biosynthesis via de novo pathway; UDP from UMP (UMPK route): step 1/1.</text>
</comment>
<comment type="subunit">
    <text evidence="1">Homohexamer.</text>
</comment>
<comment type="subcellular location">
    <subcellularLocation>
        <location evidence="1">Cytoplasm</location>
    </subcellularLocation>
</comment>
<comment type="similarity">
    <text evidence="1">Belongs to the UMP kinase family.</text>
</comment>
<comment type="sequence caution" evidence="2">
    <conflict type="erroneous initiation">
        <sequence resource="EMBL-CDS" id="BAC50124"/>
    </conflict>
</comment>
<dbReference type="EC" id="2.7.4.22" evidence="1"/>
<dbReference type="EMBL" id="BA000040">
    <property type="protein sequence ID" value="BAC50124.1"/>
    <property type="status" value="ALT_INIT"/>
    <property type="molecule type" value="Genomic_DNA"/>
</dbReference>
<dbReference type="RefSeq" id="NP_771499.1">
    <property type="nucleotide sequence ID" value="NC_004463.1"/>
</dbReference>
<dbReference type="RefSeq" id="WP_027545778.1">
    <property type="nucleotide sequence ID" value="NZ_CP011360.1"/>
</dbReference>
<dbReference type="SMR" id="Q89KP5"/>
<dbReference type="FunCoup" id="Q89KP5">
    <property type="interactions" value="762"/>
</dbReference>
<dbReference type="STRING" id="224911.AAV28_21605"/>
<dbReference type="EnsemblBacteria" id="BAC50124">
    <property type="protein sequence ID" value="BAC50124"/>
    <property type="gene ID" value="BAC50124"/>
</dbReference>
<dbReference type="GeneID" id="46491862"/>
<dbReference type="KEGG" id="bja:bll4859"/>
<dbReference type="PATRIC" id="fig|224911.44.peg.4704"/>
<dbReference type="eggNOG" id="COG0528">
    <property type="taxonomic scope" value="Bacteria"/>
</dbReference>
<dbReference type="HOGENOM" id="CLU_033861_0_0_5"/>
<dbReference type="InParanoid" id="Q89KP5"/>
<dbReference type="OrthoDB" id="9807458at2"/>
<dbReference type="UniPathway" id="UPA00159">
    <property type="reaction ID" value="UER00275"/>
</dbReference>
<dbReference type="Proteomes" id="UP000002526">
    <property type="component" value="Chromosome"/>
</dbReference>
<dbReference type="GO" id="GO:0005829">
    <property type="term" value="C:cytosol"/>
    <property type="evidence" value="ECO:0000318"/>
    <property type="project" value="GO_Central"/>
</dbReference>
<dbReference type="GO" id="GO:0005524">
    <property type="term" value="F:ATP binding"/>
    <property type="evidence" value="ECO:0007669"/>
    <property type="project" value="UniProtKB-KW"/>
</dbReference>
<dbReference type="GO" id="GO:0033862">
    <property type="term" value="F:UMP kinase activity"/>
    <property type="evidence" value="ECO:0000318"/>
    <property type="project" value="GO_Central"/>
</dbReference>
<dbReference type="GO" id="GO:0044210">
    <property type="term" value="P:'de novo' CTP biosynthetic process"/>
    <property type="evidence" value="ECO:0007669"/>
    <property type="project" value="UniProtKB-UniRule"/>
</dbReference>
<dbReference type="GO" id="GO:0006225">
    <property type="term" value="P:UDP biosynthetic process"/>
    <property type="evidence" value="ECO:0000318"/>
    <property type="project" value="GO_Central"/>
</dbReference>
<dbReference type="CDD" id="cd04254">
    <property type="entry name" value="AAK_UMPK-PyrH-Ec"/>
    <property type="match status" value="1"/>
</dbReference>
<dbReference type="FunFam" id="3.40.1160.10:FF:000001">
    <property type="entry name" value="Uridylate kinase"/>
    <property type="match status" value="1"/>
</dbReference>
<dbReference type="Gene3D" id="3.40.1160.10">
    <property type="entry name" value="Acetylglutamate kinase-like"/>
    <property type="match status" value="1"/>
</dbReference>
<dbReference type="HAMAP" id="MF_01220_B">
    <property type="entry name" value="PyrH_B"/>
    <property type="match status" value="1"/>
</dbReference>
<dbReference type="InterPro" id="IPR036393">
    <property type="entry name" value="AceGlu_kinase-like_sf"/>
</dbReference>
<dbReference type="InterPro" id="IPR001048">
    <property type="entry name" value="Asp/Glu/Uridylate_kinase"/>
</dbReference>
<dbReference type="InterPro" id="IPR011817">
    <property type="entry name" value="Uridylate_kinase"/>
</dbReference>
<dbReference type="InterPro" id="IPR015963">
    <property type="entry name" value="Uridylate_kinase_bac"/>
</dbReference>
<dbReference type="NCBIfam" id="TIGR02075">
    <property type="entry name" value="pyrH_bact"/>
    <property type="match status" value="1"/>
</dbReference>
<dbReference type="PANTHER" id="PTHR42833">
    <property type="entry name" value="URIDYLATE KINASE"/>
    <property type="match status" value="1"/>
</dbReference>
<dbReference type="PANTHER" id="PTHR42833:SF4">
    <property type="entry name" value="URIDYLATE KINASE PUMPKIN, CHLOROPLASTIC"/>
    <property type="match status" value="1"/>
</dbReference>
<dbReference type="Pfam" id="PF00696">
    <property type="entry name" value="AA_kinase"/>
    <property type="match status" value="1"/>
</dbReference>
<dbReference type="PIRSF" id="PIRSF005650">
    <property type="entry name" value="Uridylate_kin"/>
    <property type="match status" value="1"/>
</dbReference>
<dbReference type="SUPFAM" id="SSF53633">
    <property type="entry name" value="Carbamate kinase-like"/>
    <property type="match status" value="1"/>
</dbReference>
<accession>Q89KP5</accession>
<gene>
    <name evidence="1" type="primary">pyrH</name>
    <name type="ordered locus">bll4859</name>
</gene>
<organism>
    <name type="scientific">Bradyrhizobium diazoefficiens (strain JCM 10833 / BCRC 13528 / IAM 13628 / NBRC 14792 / USDA 110)</name>
    <dbReference type="NCBI Taxonomy" id="224911"/>
    <lineage>
        <taxon>Bacteria</taxon>
        <taxon>Pseudomonadati</taxon>
        <taxon>Pseudomonadota</taxon>
        <taxon>Alphaproteobacteria</taxon>
        <taxon>Hyphomicrobiales</taxon>
        <taxon>Nitrobacteraceae</taxon>
        <taxon>Bradyrhizobium</taxon>
    </lineage>
</organism>
<evidence type="ECO:0000255" key="1">
    <source>
        <dbReference type="HAMAP-Rule" id="MF_01220"/>
    </source>
</evidence>
<evidence type="ECO:0000305" key="2"/>
<proteinExistence type="inferred from homology"/>
<protein>
    <recommendedName>
        <fullName evidence="1">Uridylate kinase</fullName>
        <shortName evidence="1">UK</shortName>
        <ecNumber evidence="1">2.7.4.22</ecNumber>
    </recommendedName>
    <alternativeName>
        <fullName evidence="1">Uridine monophosphate kinase</fullName>
        <shortName evidence="1">UMP kinase</shortName>
        <shortName evidence="1">UMPK</shortName>
    </alternativeName>
</protein>